<keyword id="KW-0963">Cytoplasm</keyword>
<keyword id="KW-0369">Histidine metabolism</keyword>
<keyword id="KW-0456">Lyase</keyword>
<keyword id="KW-0520">NAD</keyword>
<keyword id="KW-1185">Reference proteome</keyword>
<organism>
    <name type="scientific">Natranaerobius thermophilus (strain ATCC BAA-1301 / DSM 18059 / JW/NM-WN-LF)</name>
    <dbReference type="NCBI Taxonomy" id="457570"/>
    <lineage>
        <taxon>Bacteria</taxon>
        <taxon>Bacillati</taxon>
        <taxon>Bacillota</taxon>
        <taxon>Clostridia</taxon>
        <taxon>Natranaerobiales</taxon>
        <taxon>Natranaerobiaceae</taxon>
        <taxon>Natranaerobius</taxon>
    </lineage>
</organism>
<accession>B2A3D8</accession>
<gene>
    <name evidence="1" type="primary">hutU</name>
    <name type="ordered locus">Nther_2819</name>
</gene>
<comment type="function">
    <text evidence="1">Catalyzes the conversion of urocanate to 4-imidazolone-5-propionate.</text>
</comment>
<comment type="catalytic activity">
    <reaction evidence="1">
        <text>4-imidazolone-5-propanoate = trans-urocanate + H2O</text>
        <dbReference type="Rhea" id="RHEA:13101"/>
        <dbReference type="ChEBI" id="CHEBI:15377"/>
        <dbReference type="ChEBI" id="CHEBI:17771"/>
        <dbReference type="ChEBI" id="CHEBI:77893"/>
        <dbReference type="EC" id="4.2.1.49"/>
    </reaction>
</comment>
<comment type="cofactor">
    <cofactor evidence="1">
        <name>NAD(+)</name>
        <dbReference type="ChEBI" id="CHEBI:57540"/>
    </cofactor>
    <text evidence="1">Binds 1 NAD(+) per subunit.</text>
</comment>
<comment type="pathway">
    <text evidence="1">Amino-acid degradation; L-histidine degradation into L-glutamate; N-formimidoyl-L-glutamate from L-histidine: step 2/3.</text>
</comment>
<comment type="subcellular location">
    <subcellularLocation>
        <location evidence="1">Cytoplasm</location>
    </subcellularLocation>
</comment>
<comment type="similarity">
    <text evidence="1">Belongs to the urocanase family.</text>
</comment>
<reference key="1">
    <citation type="submission" date="2008-04" db="EMBL/GenBank/DDBJ databases">
        <title>Complete sequence of chromosome of Natranaerobius thermophilus JW/NM-WN-LF.</title>
        <authorList>
            <consortium name="US DOE Joint Genome Institute"/>
            <person name="Copeland A."/>
            <person name="Lucas S."/>
            <person name="Lapidus A."/>
            <person name="Glavina del Rio T."/>
            <person name="Dalin E."/>
            <person name="Tice H."/>
            <person name="Bruce D."/>
            <person name="Goodwin L."/>
            <person name="Pitluck S."/>
            <person name="Chertkov O."/>
            <person name="Brettin T."/>
            <person name="Detter J.C."/>
            <person name="Han C."/>
            <person name="Kuske C.R."/>
            <person name="Schmutz J."/>
            <person name="Larimer F."/>
            <person name="Land M."/>
            <person name="Hauser L."/>
            <person name="Kyrpides N."/>
            <person name="Lykidis A."/>
            <person name="Mesbah N.M."/>
            <person name="Wiegel J."/>
        </authorList>
    </citation>
    <scope>NUCLEOTIDE SEQUENCE [LARGE SCALE GENOMIC DNA]</scope>
    <source>
        <strain>ATCC BAA-1301 / DSM 18059 / JW/NM-WN-LF</strain>
    </source>
</reference>
<evidence type="ECO:0000255" key="1">
    <source>
        <dbReference type="HAMAP-Rule" id="MF_00577"/>
    </source>
</evidence>
<sequence length="549" mass="60588">MSRKVRAPRGTDLHCKGWQQEGPMRMLMNNLDPEVAEKPEELIVYGGSGKAARNWEAFDAIVKSLQELEDDETLLVQSGKPVGVFKTHSQAPRVLIANSLLVPSWADWDQFRELEKQGLTMYGQMTAGSWIYIGTQGILQGTYETFGAAADKHYNGDLSGKFVLTAGLGGMGGAQPLAVTMNNGVVLCVEVDRERIERRIDYQYLDKMAENLDEALELVDEAVSEKKPLSIGLLGNAASIYPELVKRGRIPDMVTDQTSAHDILNGYVPADLDFPYALELRHQDPEKYMKLSKSSIAKHVEAMLEFQKQGAIVFDYGNNIRQQAYIEGITKAFDFPGFVPAYIRPQFCEGKGPFRWVALSGDPEDIYRTDRLILEEFSDNEHLCRWIKMAGEQVSFQGLPSRICWLGYGERARFGKLINDLVAKGEIKAPIVIGRDHLDCGSVASPNRETEGMKDGSDAIADWPILNALINTAAGAHWVSVHHGGGVGIGYSLHAGIVVMADGSKDAEERLERVLTSDPGTGIIRHVDAGYELAKKTASEQGVNIPMWS</sequence>
<dbReference type="EC" id="4.2.1.49" evidence="1"/>
<dbReference type="EMBL" id="CP001034">
    <property type="protein sequence ID" value="ACB86367.1"/>
    <property type="molecule type" value="Genomic_DNA"/>
</dbReference>
<dbReference type="RefSeq" id="WP_012449200.1">
    <property type="nucleotide sequence ID" value="NC_010718.1"/>
</dbReference>
<dbReference type="SMR" id="B2A3D8"/>
<dbReference type="FunCoup" id="B2A3D8">
    <property type="interactions" value="49"/>
</dbReference>
<dbReference type="STRING" id="457570.Nther_2819"/>
<dbReference type="KEGG" id="nth:Nther_2819"/>
<dbReference type="eggNOG" id="COG2987">
    <property type="taxonomic scope" value="Bacteria"/>
</dbReference>
<dbReference type="HOGENOM" id="CLU_018868_0_1_9"/>
<dbReference type="InParanoid" id="B2A3D8"/>
<dbReference type="UniPathway" id="UPA00379">
    <property type="reaction ID" value="UER00550"/>
</dbReference>
<dbReference type="Proteomes" id="UP000001683">
    <property type="component" value="Chromosome"/>
</dbReference>
<dbReference type="GO" id="GO:0005737">
    <property type="term" value="C:cytoplasm"/>
    <property type="evidence" value="ECO:0007669"/>
    <property type="project" value="UniProtKB-SubCell"/>
</dbReference>
<dbReference type="GO" id="GO:0016153">
    <property type="term" value="F:urocanate hydratase activity"/>
    <property type="evidence" value="ECO:0007669"/>
    <property type="project" value="UniProtKB-UniRule"/>
</dbReference>
<dbReference type="GO" id="GO:0019556">
    <property type="term" value="P:L-histidine catabolic process to glutamate and formamide"/>
    <property type="evidence" value="ECO:0007669"/>
    <property type="project" value="UniProtKB-UniPathway"/>
</dbReference>
<dbReference type="GO" id="GO:0019557">
    <property type="term" value="P:L-histidine catabolic process to glutamate and formate"/>
    <property type="evidence" value="ECO:0007669"/>
    <property type="project" value="UniProtKB-UniPathway"/>
</dbReference>
<dbReference type="FunFam" id="3.40.50.10730:FF:000001">
    <property type="entry name" value="Urocanate hydratase"/>
    <property type="match status" value="1"/>
</dbReference>
<dbReference type="Gene3D" id="3.40.50.10730">
    <property type="entry name" value="Urocanase like domains"/>
    <property type="match status" value="1"/>
</dbReference>
<dbReference type="Gene3D" id="3.40.1770.10">
    <property type="entry name" value="Urocanase superfamily"/>
    <property type="match status" value="1"/>
</dbReference>
<dbReference type="HAMAP" id="MF_00577">
    <property type="entry name" value="HutU"/>
    <property type="match status" value="1"/>
</dbReference>
<dbReference type="InterPro" id="IPR055351">
    <property type="entry name" value="Urocanase"/>
</dbReference>
<dbReference type="InterPro" id="IPR023637">
    <property type="entry name" value="Urocanase-like"/>
</dbReference>
<dbReference type="InterPro" id="IPR035401">
    <property type="entry name" value="Urocanase_C"/>
</dbReference>
<dbReference type="InterPro" id="IPR038364">
    <property type="entry name" value="Urocanase_central_sf"/>
</dbReference>
<dbReference type="InterPro" id="IPR023636">
    <property type="entry name" value="Urocanase_CS"/>
</dbReference>
<dbReference type="InterPro" id="IPR035400">
    <property type="entry name" value="Urocanase_N"/>
</dbReference>
<dbReference type="InterPro" id="IPR035085">
    <property type="entry name" value="Urocanase_Rossmann-like"/>
</dbReference>
<dbReference type="InterPro" id="IPR036190">
    <property type="entry name" value="Urocanase_sf"/>
</dbReference>
<dbReference type="NCBIfam" id="TIGR01228">
    <property type="entry name" value="hutU"/>
    <property type="match status" value="1"/>
</dbReference>
<dbReference type="NCBIfam" id="NF003820">
    <property type="entry name" value="PRK05414.1"/>
    <property type="match status" value="1"/>
</dbReference>
<dbReference type="PANTHER" id="PTHR12216">
    <property type="entry name" value="UROCANATE HYDRATASE"/>
    <property type="match status" value="1"/>
</dbReference>
<dbReference type="PANTHER" id="PTHR12216:SF4">
    <property type="entry name" value="UROCANATE HYDRATASE"/>
    <property type="match status" value="1"/>
</dbReference>
<dbReference type="Pfam" id="PF01175">
    <property type="entry name" value="Urocanase"/>
    <property type="match status" value="1"/>
</dbReference>
<dbReference type="Pfam" id="PF17392">
    <property type="entry name" value="Urocanase_C"/>
    <property type="match status" value="1"/>
</dbReference>
<dbReference type="Pfam" id="PF17391">
    <property type="entry name" value="Urocanase_N"/>
    <property type="match status" value="1"/>
</dbReference>
<dbReference type="PIRSF" id="PIRSF001423">
    <property type="entry name" value="Urocanate_hydrat"/>
    <property type="match status" value="1"/>
</dbReference>
<dbReference type="SUPFAM" id="SSF111326">
    <property type="entry name" value="Urocanase"/>
    <property type="match status" value="1"/>
</dbReference>
<dbReference type="PROSITE" id="PS01233">
    <property type="entry name" value="UROCANASE"/>
    <property type="match status" value="1"/>
</dbReference>
<protein>
    <recommendedName>
        <fullName evidence="1">Urocanate hydratase</fullName>
        <shortName evidence="1">Urocanase</shortName>
        <ecNumber evidence="1">4.2.1.49</ecNumber>
    </recommendedName>
    <alternativeName>
        <fullName evidence="1">Imidazolonepropionate hydrolase</fullName>
    </alternativeName>
</protein>
<name>HUTU_NATTJ</name>
<feature type="chain" id="PRO_1000199901" description="Urocanate hydratase">
    <location>
        <begin position="1"/>
        <end position="549"/>
    </location>
</feature>
<feature type="active site" evidence="1">
    <location>
        <position position="404"/>
    </location>
</feature>
<feature type="binding site" evidence="1">
    <location>
        <begin position="46"/>
        <end position="47"/>
    </location>
    <ligand>
        <name>NAD(+)</name>
        <dbReference type="ChEBI" id="CHEBI:57540"/>
    </ligand>
</feature>
<feature type="binding site" evidence="1">
    <location>
        <position position="124"/>
    </location>
    <ligand>
        <name>NAD(+)</name>
        <dbReference type="ChEBI" id="CHEBI:57540"/>
    </ligand>
</feature>
<feature type="binding site" evidence="1">
    <location>
        <begin position="170"/>
        <end position="172"/>
    </location>
    <ligand>
        <name>NAD(+)</name>
        <dbReference type="ChEBI" id="CHEBI:57540"/>
    </ligand>
</feature>
<feature type="binding site" evidence="1">
    <location>
        <position position="190"/>
    </location>
    <ligand>
        <name>NAD(+)</name>
        <dbReference type="ChEBI" id="CHEBI:57540"/>
    </ligand>
</feature>
<feature type="binding site" evidence="1">
    <location>
        <position position="195"/>
    </location>
    <ligand>
        <name>NAD(+)</name>
        <dbReference type="ChEBI" id="CHEBI:57540"/>
    </ligand>
</feature>
<feature type="binding site" evidence="1">
    <location>
        <begin position="236"/>
        <end position="237"/>
    </location>
    <ligand>
        <name>NAD(+)</name>
        <dbReference type="ChEBI" id="CHEBI:57540"/>
    </ligand>
</feature>
<feature type="binding site" evidence="1">
    <location>
        <begin position="257"/>
        <end position="261"/>
    </location>
    <ligand>
        <name>NAD(+)</name>
        <dbReference type="ChEBI" id="CHEBI:57540"/>
    </ligand>
</feature>
<feature type="binding site" evidence="1">
    <location>
        <begin position="267"/>
        <end position="268"/>
    </location>
    <ligand>
        <name>NAD(+)</name>
        <dbReference type="ChEBI" id="CHEBI:57540"/>
    </ligand>
</feature>
<feature type="binding site" evidence="1">
    <location>
        <position position="316"/>
    </location>
    <ligand>
        <name>NAD(+)</name>
        <dbReference type="ChEBI" id="CHEBI:57540"/>
    </ligand>
</feature>
<feature type="binding site" evidence="1">
    <location>
        <position position="486"/>
    </location>
    <ligand>
        <name>NAD(+)</name>
        <dbReference type="ChEBI" id="CHEBI:57540"/>
    </ligand>
</feature>
<proteinExistence type="inferred from homology"/>